<sequence>MIGVKQTKRLYAYFLREDLYITLVQHTKNQIHATSQTNNFIVPISFFRIKKAITRMRKQHNITILKQGNLSDEYQAILQIINVALVYINKPVFSLYVPSFRNQTYPKQFINNTITGLNQHHTNIYNGMFSKRDVSIHSAFLFLENRYHSCNYLLEDKIHYLIHPEIIIRIIRKYVFDVCLIHCYRIVFYFIMMHLNRSKQTFNYSMDQAILSMRNIYAIEIDSFFADESLKILNQTTYSPIWAPYDRSIFHKCTLYEFHVTFKSVLNRKILKHIIYYSKLSKNKYGLSPIGFYRFGACHYLRCNSIWKFAMQANSNFMYLFGFRYMRFITRRMGAFYFHYVSSVVYDIRSITKHKIVLLGVLVKSDNAVVKIQTQIFQNILPITYLRIQYIRILSPNHLVIKALYKYQLCTSAGYPLHRYSWTTFGNIQIVQRFKVLQHSIIFYYSGCINRKALSYVKQILRYSCAKTLAFKHKTTTRNILSTKIDQNVNILNVFNTKKQFWLSFELNNITLNLRVWHLELFNQYRLMQDD</sequence>
<evidence type="ECO:0000250" key="1"/>
<evidence type="ECO:0000305" key="2"/>
<keyword id="KW-0150">Chloroplast</keyword>
<keyword id="KW-0507">mRNA processing</keyword>
<keyword id="KW-0934">Plastid</keyword>
<keyword id="KW-0694">RNA-binding</keyword>
<keyword id="KW-0819">tRNA processing</keyword>
<proteinExistence type="inferred from homology"/>
<reference key="1">
    <citation type="journal article" date="2005" name="BMC Biol.">
        <title>The complete chloroplast DNA sequences of the charophycean green algae Staurastrum and Zygnema reveal that the chloroplast genome underwent extensive changes during the evolution of the Zygnematales.</title>
        <authorList>
            <person name="Turmel M."/>
            <person name="Otis C."/>
            <person name="Lemieux C."/>
        </authorList>
    </citation>
    <scope>NUCLEOTIDE SEQUENCE [LARGE SCALE GENOMIC DNA]</scope>
</reference>
<feature type="chain" id="PRO_0000363785" description="Maturase K">
    <location>
        <begin position="1"/>
        <end position="531"/>
    </location>
</feature>
<geneLocation type="chloroplast"/>
<organism>
    <name type="scientific">Zygnema circumcarinatum</name>
    <name type="common">Green alga</name>
    <dbReference type="NCBI Taxonomy" id="35869"/>
    <lineage>
        <taxon>Eukaryota</taxon>
        <taxon>Viridiplantae</taxon>
        <taxon>Streptophyta</taxon>
        <taxon>Zygnematophyceae</taxon>
        <taxon>Zygnematophycidae</taxon>
        <taxon>Zygnematales</taxon>
        <taxon>Zygnemataceae</taxon>
        <taxon>Zygnema</taxon>
    </lineage>
</organism>
<accession>Q32RL3</accession>
<protein>
    <recommendedName>
        <fullName>Maturase K</fullName>
    </recommendedName>
    <alternativeName>
        <fullName>Intron maturase</fullName>
    </alternativeName>
</protein>
<gene>
    <name type="primary">matK</name>
</gene>
<comment type="function">
    <text evidence="1">Usually encoded in the trnK tRNA gene intron. Probably assists in splicing its own and other chloroplast group II introns (By similarity).</text>
</comment>
<comment type="subcellular location">
    <subcellularLocation>
        <location>Plastid</location>
        <location>Chloroplast</location>
    </subcellularLocation>
</comment>
<comment type="similarity">
    <text evidence="2">Belongs to the intron maturase 2 family. MatK subfamily.</text>
</comment>
<dbReference type="EMBL" id="AY958086">
    <property type="protein sequence ID" value="AAX45885.1"/>
    <property type="molecule type" value="Genomic_DNA"/>
</dbReference>
<dbReference type="RefSeq" id="YP_636513.1">
    <property type="nucleotide sequence ID" value="NC_008117.1"/>
</dbReference>
<dbReference type="GeneID" id="4108213"/>
<dbReference type="GO" id="GO:0009507">
    <property type="term" value="C:chloroplast"/>
    <property type="evidence" value="ECO:0007669"/>
    <property type="project" value="UniProtKB-SubCell"/>
</dbReference>
<dbReference type="GO" id="GO:0003723">
    <property type="term" value="F:RNA binding"/>
    <property type="evidence" value="ECO:0007669"/>
    <property type="project" value="UniProtKB-KW"/>
</dbReference>
<dbReference type="GO" id="GO:0006397">
    <property type="term" value="P:mRNA processing"/>
    <property type="evidence" value="ECO:0007669"/>
    <property type="project" value="UniProtKB-KW"/>
</dbReference>
<dbReference type="GO" id="GO:0008380">
    <property type="term" value="P:RNA splicing"/>
    <property type="evidence" value="ECO:0007669"/>
    <property type="project" value="UniProtKB-UniRule"/>
</dbReference>
<dbReference type="GO" id="GO:0008033">
    <property type="term" value="P:tRNA processing"/>
    <property type="evidence" value="ECO:0007669"/>
    <property type="project" value="UniProtKB-KW"/>
</dbReference>
<dbReference type="HAMAP" id="MF_01390">
    <property type="entry name" value="MatK"/>
    <property type="match status" value="1"/>
</dbReference>
<dbReference type="InterPro" id="IPR024937">
    <property type="entry name" value="Domain_X"/>
</dbReference>
<dbReference type="InterPro" id="IPR002866">
    <property type="entry name" value="Maturase_MatK"/>
</dbReference>
<dbReference type="InterPro" id="IPR024942">
    <property type="entry name" value="Maturase_MatK_N"/>
</dbReference>
<dbReference type="PANTHER" id="PTHR34811">
    <property type="entry name" value="MATURASE K"/>
    <property type="match status" value="1"/>
</dbReference>
<dbReference type="PANTHER" id="PTHR34811:SF1">
    <property type="entry name" value="MATURASE K"/>
    <property type="match status" value="1"/>
</dbReference>
<dbReference type="Pfam" id="PF01348">
    <property type="entry name" value="Intron_maturas2"/>
    <property type="match status" value="1"/>
</dbReference>
<dbReference type="Pfam" id="PF01824">
    <property type="entry name" value="MatK_N"/>
    <property type="match status" value="1"/>
</dbReference>
<name>MATK_ZYGCR</name>